<feature type="chain" id="PRO_1000114562" description="Glycine cleavage system H protein">
    <location>
        <begin position="1"/>
        <end position="125"/>
    </location>
</feature>
<feature type="domain" description="Lipoyl-binding" evidence="2">
    <location>
        <begin position="19"/>
        <end position="101"/>
    </location>
</feature>
<feature type="modified residue" description="N6-lipoyllysine" evidence="1">
    <location>
        <position position="60"/>
    </location>
</feature>
<accession>A7IHF1</accession>
<organism>
    <name type="scientific">Xanthobacter autotrophicus (strain ATCC BAA-1158 / Py2)</name>
    <dbReference type="NCBI Taxonomy" id="78245"/>
    <lineage>
        <taxon>Bacteria</taxon>
        <taxon>Pseudomonadati</taxon>
        <taxon>Pseudomonadota</taxon>
        <taxon>Alphaproteobacteria</taxon>
        <taxon>Hyphomicrobiales</taxon>
        <taxon>Xanthobacteraceae</taxon>
        <taxon>Xanthobacter</taxon>
    </lineage>
</organism>
<comment type="function">
    <text evidence="1">The glycine cleavage system catalyzes the degradation of glycine. The H protein shuttles the methylamine group of glycine from the P protein to the T protein.</text>
</comment>
<comment type="cofactor">
    <cofactor evidence="1">
        <name>(R)-lipoate</name>
        <dbReference type="ChEBI" id="CHEBI:83088"/>
    </cofactor>
    <text evidence="1">Binds 1 lipoyl cofactor covalently.</text>
</comment>
<comment type="subunit">
    <text evidence="1">The glycine cleavage system is composed of four proteins: P, T, L and H.</text>
</comment>
<comment type="similarity">
    <text evidence="1">Belongs to the GcvH family.</text>
</comment>
<gene>
    <name evidence="1" type="primary">gcvH</name>
    <name type="ordered locus">Xaut_2200</name>
</gene>
<dbReference type="EMBL" id="CP000781">
    <property type="protein sequence ID" value="ABS67444.1"/>
    <property type="molecule type" value="Genomic_DNA"/>
</dbReference>
<dbReference type="SMR" id="A7IHF1"/>
<dbReference type="STRING" id="78245.Xaut_2200"/>
<dbReference type="KEGG" id="xau:Xaut_2200"/>
<dbReference type="eggNOG" id="COG0509">
    <property type="taxonomic scope" value="Bacteria"/>
</dbReference>
<dbReference type="HOGENOM" id="CLU_097408_2_0_5"/>
<dbReference type="OrthoDB" id="9796712at2"/>
<dbReference type="PhylomeDB" id="A7IHF1"/>
<dbReference type="Proteomes" id="UP000002417">
    <property type="component" value="Chromosome"/>
</dbReference>
<dbReference type="GO" id="GO:0005737">
    <property type="term" value="C:cytoplasm"/>
    <property type="evidence" value="ECO:0007669"/>
    <property type="project" value="TreeGrafter"/>
</dbReference>
<dbReference type="GO" id="GO:0005960">
    <property type="term" value="C:glycine cleavage complex"/>
    <property type="evidence" value="ECO:0007669"/>
    <property type="project" value="InterPro"/>
</dbReference>
<dbReference type="GO" id="GO:0019464">
    <property type="term" value="P:glycine decarboxylation via glycine cleavage system"/>
    <property type="evidence" value="ECO:0007669"/>
    <property type="project" value="UniProtKB-UniRule"/>
</dbReference>
<dbReference type="CDD" id="cd06848">
    <property type="entry name" value="GCS_H"/>
    <property type="match status" value="1"/>
</dbReference>
<dbReference type="Gene3D" id="2.40.50.100">
    <property type="match status" value="1"/>
</dbReference>
<dbReference type="HAMAP" id="MF_00272">
    <property type="entry name" value="GcvH"/>
    <property type="match status" value="1"/>
</dbReference>
<dbReference type="InterPro" id="IPR003016">
    <property type="entry name" value="2-oxoA_DH_lipoyl-BS"/>
</dbReference>
<dbReference type="InterPro" id="IPR000089">
    <property type="entry name" value="Biotin_lipoyl"/>
</dbReference>
<dbReference type="InterPro" id="IPR002930">
    <property type="entry name" value="GCV_H"/>
</dbReference>
<dbReference type="InterPro" id="IPR033753">
    <property type="entry name" value="GCV_H/Fam206"/>
</dbReference>
<dbReference type="InterPro" id="IPR017453">
    <property type="entry name" value="GCV_H_sub"/>
</dbReference>
<dbReference type="InterPro" id="IPR011053">
    <property type="entry name" value="Single_hybrid_motif"/>
</dbReference>
<dbReference type="NCBIfam" id="TIGR00527">
    <property type="entry name" value="gcvH"/>
    <property type="match status" value="1"/>
</dbReference>
<dbReference type="NCBIfam" id="NF002270">
    <property type="entry name" value="PRK01202.1"/>
    <property type="match status" value="1"/>
</dbReference>
<dbReference type="PANTHER" id="PTHR11715">
    <property type="entry name" value="GLYCINE CLEAVAGE SYSTEM H PROTEIN"/>
    <property type="match status" value="1"/>
</dbReference>
<dbReference type="PANTHER" id="PTHR11715:SF3">
    <property type="entry name" value="GLYCINE CLEAVAGE SYSTEM H PROTEIN-RELATED"/>
    <property type="match status" value="1"/>
</dbReference>
<dbReference type="Pfam" id="PF01597">
    <property type="entry name" value="GCV_H"/>
    <property type="match status" value="1"/>
</dbReference>
<dbReference type="SUPFAM" id="SSF51230">
    <property type="entry name" value="Single hybrid motif"/>
    <property type="match status" value="1"/>
</dbReference>
<dbReference type="PROSITE" id="PS50968">
    <property type="entry name" value="BIOTINYL_LIPOYL"/>
    <property type="match status" value="1"/>
</dbReference>
<dbReference type="PROSITE" id="PS00189">
    <property type="entry name" value="LIPOYL"/>
    <property type="match status" value="1"/>
</dbReference>
<keyword id="KW-0450">Lipoyl</keyword>
<keyword id="KW-1185">Reference proteome</keyword>
<proteinExistence type="inferred from homology"/>
<name>GCSH_XANP2</name>
<protein>
    <recommendedName>
        <fullName evidence="1">Glycine cleavage system H protein</fullName>
    </recommendedName>
</protein>
<sequence length="125" mass="13496">MTSVRYTKDHEYVRVEGDVAVVGISDYAQQQLGDVVFVELPEIGKVVTKGGEAAVVESVKAASEVYAPLSGEVVEVNSELEGAPGLVNEAPEGKGWFMKLKLSNPAELDELLNEHAYKDFLDTLA</sequence>
<evidence type="ECO:0000255" key="1">
    <source>
        <dbReference type="HAMAP-Rule" id="MF_00272"/>
    </source>
</evidence>
<evidence type="ECO:0000255" key="2">
    <source>
        <dbReference type="PROSITE-ProRule" id="PRU01066"/>
    </source>
</evidence>
<reference key="1">
    <citation type="submission" date="2007-07" db="EMBL/GenBank/DDBJ databases">
        <title>Complete sequence of chromosome of Xanthobacter autotrophicus Py2.</title>
        <authorList>
            <consortium name="US DOE Joint Genome Institute"/>
            <person name="Copeland A."/>
            <person name="Lucas S."/>
            <person name="Lapidus A."/>
            <person name="Barry K."/>
            <person name="Glavina del Rio T."/>
            <person name="Hammon N."/>
            <person name="Israni S."/>
            <person name="Dalin E."/>
            <person name="Tice H."/>
            <person name="Pitluck S."/>
            <person name="Sims D."/>
            <person name="Brettin T."/>
            <person name="Bruce D."/>
            <person name="Detter J.C."/>
            <person name="Han C."/>
            <person name="Tapia R."/>
            <person name="Brainard J."/>
            <person name="Schmutz J."/>
            <person name="Larimer F."/>
            <person name="Land M."/>
            <person name="Hauser L."/>
            <person name="Kyrpides N."/>
            <person name="Kim E."/>
            <person name="Ensigns S.A."/>
            <person name="Richardson P."/>
        </authorList>
    </citation>
    <scope>NUCLEOTIDE SEQUENCE [LARGE SCALE GENOMIC DNA]</scope>
    <source>
        <strain>ATCC BAA-1158 / Py2</strain>
    </source>
</reference>